<reference key="1">
    <citation type="journal article" date="2010" name="BMC Genomics">
        <title>A genomic perspective on the potential of Actinobacillus succinogenes for industrial succinate production.</title>
        <authorList>
            <person name="McKinlay J.B."/>
            <person name="Laivenieks M."/>
            <person name="Schindler B.D."/>
            <person name="McKinlay A.A."/>
            <person name="Siddaramappa S."/>
            <person name="Challacombe J.F."/>
            <person name="Lowry S.R."/>
            <person name="Clum A."/>
            <person name="Lapidus A.L."/>
            <person name="Burkhart K.B."/>
            <person name="Harkins V."/>
            <person name="Vieille C."/>
        </authorList>
    </citation>
    <scope>NUCLEOTIDE SEQUENCE [LARGE SCALE GENOMIC DNA]</scope>
    <source>
        <strain>ATCC 55618 / DSM 22257 / CCUG 43843 / 130Z</strain>
    </source>
</reference>
<gene>
    <name evidence="1" type="primary">htpG</name>
    <name type="ordered locus">Asuc_0839</name>
</gene>
<protein>
    <recommendedName>
        <fullName evidence="1">Chaperone protein HtpG</fullName>
    </recommendedName>
    <alternativeName>
        <fullName evidence="1">Heat shock protein HtpG</fullName>
    </alternativeName>
    <alternativeName>
        <fullName evidence="1">High temperature protein G</fullName>
    </alternativeName>
</protein>
<name>HTPG_ACTSZ</name>
<comment type="function">
    <text evidence="1">Molecular chaperone. Has ATPase activity.</text>
</comment>
<comment type="subunit">
    <text evidence="1">Homodimer.</text>
</comment>
<comment type="subcellular location">
    <subcellularLocation>
        <location evidence="1">Cytoplasm</location>
    </subcellularLocation>
</comment>
<comment type="similarity">
    <text evidence="1">Belongs to the heat shock protein 90 family.</text>
</comment>
<feature type="chain" id="PRO_1000081512" description="Chaperone protein HtpG">
    <location>
        <begin position="1"/>
        <end position="628"/>
    </location>
</feature>
<feature type="region of interest" description="A; substrate-binding" evidence="1">
    <location>
        <begin position="1"/>
        <end position="339"/>
    </location>
</feature>
<feature type="region of interest" description="B" evidence="1">
    <location>
        <begin position="340"/>
        <end position="556"/>
    </location>
</feature>
<feature type="region of interest" description="C" evidence="1">
    <location>
        <begin position="557"/>
        <end position="628"/>
    </location>
</feature>
<keyword id="KW-0067">ATP-binding</keyword>
<keyword id="KW-0143">Chaperone</keyword>
<keyword id="KW-0963">Cytoplasm</keyword>
<keyword id="KW-0547">Nucleotide-binding</keyword>
<keyword id="KW-1185">Reference proteome</keyword>
<keyword id="KW-0346">Stress response</keyword>
<dbReference type="EMBL" id="CP000746">
    <property type="protein sequence ID" value="ABR74209.1"/>
    <property type="molecule type" value="Genomic_DNA"/>
</dbReference>
<dbReference type="RefSeq" id="WP_012072587.1">
    <property type="nucleotide sequence ID" value="NC_009655.1"/>
</dbReference>
<dbReference type="SMR" id="A6VML2"/>
<dbReference type="STRING" id="339671.Asuc_0839"/>
<dbReference type="KEGG" id="asu:Asuc_0839"/>
<dbReference type="eggNOG" id="COG0326">
    <property type="taxonomic scope" value="Bacteria"/>
</dbReference>
<dbReference type="HOGENOM" id="CLU_006684_3_0_6"/>
<dbReference type="OrthoDB" id="9802640at2"/>
<dbReference type="Proteomes" id="UP000001114">
    <property type="component" value="Chromosome"/>
</dbReference>
<dbReference type="GO" id="GO:0005737">
    <property type="term" value="C:cytoplasm"/>
    <property type="evidence" value="ECO:0007669"/>
    <property type="project" value="UniProtKB-SubCell"/>
</dbReference>
<dbReference type="GO" id="GO:0005524">
    <property type="term" value="F:ATP binding"/>
    <property type="evidence" value="ECO:0007669"/>
    <property type="project" value="UniProtKB-UniRule"/>
</dbReference>
<dbReference type="GO" id="GO:0016887">
    <property type="term" value="F:ATP hydrolysis activity"/>
    <property type="evidence" value="ECO:0007669"/>
    <property type="project" value="InterPro"/>
</dbReference>
<dbReference type="GO" id="GO:0140662">
    <property type="term" value="F:ATP-dependent protein folding chaperone"/>
    <property type="evidence" value="ECO:0007669"/>
    <property type="project" value="InterPro"/>
</dbReference>
<dbReference type="GO" id="GO:0051082">
    <property type="term" value="F:unfolded protein binding"/>
    <property type="evidence" value="ECO:0007669"/>
    <property type="project" value="UniProtKB-UniRule"/>
</dbReference>
<dbReference type="CDD" id="cd16927">
    <property type="entry name" value="HATPase_Hsp90-like"/>
    <property type="match status" value="1"/>
</dbReference>
<dbReference type="FunFam" id="1.20.120.790:FF:000002">
    <property type="entry name" value="Molecular chaperone HtpG"/>
    <property type="match status" value="1"/>
</dbReference>
<dbReference type="FunFam" id="3.30.230.80:FF:000002">
    <property type="entry name" value="Molecular chaperone HtpG"/>
    <property type="match status" value="1"/>
</dbReference>
<dbReference type="FunFam" id="3.30.565.10:FF:000009">
    <property type="entry name" value="Molecular chaperone HtpG"/>
    <property type="match status" value="1"/>
</dbReference>
<dbReference type="FunFam" id="3.40.50.11260:FF:000002">
    <property type="entry name" value="Molecular chaperone HtpG"/>
    <property type="match status" value="1"/>
</dbReference>
<dbReference type="Gene3D" id="3.30.230.80">
    <property type="match status" value="1"/>
</dbReference>
<dbReference type="Gene3D" id="3.40.50.11260">
    <property type="match status" value="1"/>
</dbReference>
<dbReference type="Gene3D" id="1.20.120.790">
    <property type="entry name" value="Heat shock protein 90, C-terminal domain"/>
    <property type="match status" value="1"/>
</dbReference>
<dbReference type="Gene3D" id="3.30.565.10">
    <property type="entry name" value="Histidine kinase-like ATPase, C-terminal domain"/>
    <property type="match status" value="1"/>
</dbReference>
<dbReference type="HAMAP" id="MF_00505">
    <property type="entry name" value="HSP90"/>
    <property type="match status" value="1"/>
</dbReference>
<dbReference type="InterPro" id="IPR036890">
    <property type="entry name" value="HATPase_C_sf"/>
</dbReference>
<dbReference type="InterPro" id="IPR019805">
    <property type="entry name" value="Heat_shock_protein_90_CS"/>
</dbReference>
<dbReference type="InterPro" id="IPR037196">
    <property type="entry name" value="HSP90_C"/>
</dbReference>
<dbReference type="InterPro" id="IPR001404">
    <property type="entry name" value="Hsp90_fam"/>
</dbReference>
<dbReference type="InterPro" id="IPR020575">
    <property type="entry name" value="Hsp90_N"/>
</dbReference>
<dbReference type="InterPro" id="IPR020568">
    <property type="entry name" value="Ribosomal_Su5_D2-typ_SF"/>
</dbReference>
<dbReference type="NCBIfam" id="NF003555">
    <property type="entry name" value="PRK05218.1"/>
    <property type="match status" value="1"/>
</dbReference>
<dbReference type="PANTHER" id="PTHR11528">
    <property type="entry name" value="HEAT SHOCK PROTEIN 90 FAMILY MEMBER"/>
    <property type="match status" value="1"/>
</dbReference>
<dbReference type="Pfam" id="PF13589">
    <property type="entry name" value="HATPase_c_3"/>
    <property type="match status" value="1"/>
</dbReference>
<dbReference type="Pfam" id="PF00183">
    <property type="entry name" value="HSP90"/>
    <property type="match status" value="1"/>
</dbReference>
<dbReference type="PIRSF" id="PIRSF002583">
    <property type="entry name" value="Hsp90"/>
    <property type="match status" value="1"/>
</dbReference>
<dbReference type="PRINTS" id="PR00775">
    <property type="entry name" value="HEATSHOCK90"/>
</dbReference>
<dbReference type="SMART" id="SM00387">
    <property type="entry name" value="HATPase_c"/>
    <property type="match status" value="1"/>
</dbReference>
<dbReference type="SUPFAM" id="SSF55874">
    <property type="entry name" value="ATPase domain of HSP90 chaperone/DNA topoisomerase II/histidine kinase"/>
    <property type="match status" value="1"/>
</dbReference>
<dbReference type="SUPFAM" id="SSF110942">
    <property type="entry name" value="HSP90 C-terminal domain"/>
    <property type="match status" value="1"/>
</dbReference>
<dbReference type="SUPFAM" id="SSF54211">
    <property type="entry name" value="Ribosomal protein S5 domain 2-like"/>
    <property type="match status" value="1"/>
</dbReference>
<dbReference type="PROSITE" id="PS00298">
    <property type="entry name" value="HSP90"/>
    <property type="match status" value="1"/>
</dbReference>
<evidence type="ECO:0000255" key="1">
    <source>
        <dbReference type="HAMAP-Rule" id="MF_00505"/>
    </source>
</evidence>
<proteinExistence type="inferred from homology"/>
<organism>
    <name type="scientific">Actinobacillus succinogenes (strain ATCC 55618 / DSM 22257 / CCUG 43843 / 130Z)</name>
    <dbReference type="NCBI Taxonomy" id="339671"/>
    <lineage>
        <taxon>Bacteria</taxon>
        <taxon>Pseudomonadati</taxon>
        <taxon>Pseudomonadota</taxon>
        <taxon>Gammaproteobacteria</taxon>
        <taxon>Pasteurellales</taxon>
        <taxon>Pasteurellaceae</taxon>
        <taxon>Actinobacillus</taxon>
    </lineage>
</organism>
<sequence>MSNNQQTLGFQTEVKQLLQLMIHSLYSNKEIFLRELISNASDAADKLRFKALSAPELYEGDGDLKVRIRFDEKKGTLTVSDNGIGMTREQATEHLGTIAKSGTKEFLTALGQDQAKDSQLIGQFGVGFYSAFIVADKVEVRSRAAGVPAEQGVLWTSAGEGEYSVEDIEKKERGTEITLFLREDEKEFLNEWRLREIIGKYSDHIGLPVEILTKEFDEEGKESDVKWEKINKAQALWTRAKGEISDEEYQEFYKHISHDFADPLVWQHNKVEGNQEYTSLLYVPSKAPWDLFNREQKHGLKLYVQRVFIMDDAEVFMPNYLRFMRGLLDSNDLPLNVSREILQDNKTTAALRKALTKRSLQMLEKLAKDEAEKYATFWKEFGLVLKEGVGEDFANREQIAKLFRFASTHTDSSEQSVSLADYIARMKEGQKAVYYITADSYVAAKNSPHLELFNKKGIEVLLLSDRIDEWMLSYLTEFDGKPLQSITKADLDLGDLADKTEAEKEKAQDEALSGFIERVKTLLGERVKDVRLTHRLTDTPAVVSTDNDQMTTQMAKLFAMSGQPVPEVKYTFELNPDHALVKKTAALTDESAFADWVELLLEQAMLSERGTLENPTAFIKRVNTLLAG</sequence>
<accession>A6VML2</accession>